<keyword id="KW-0276">Fatty acid metabolism</keyword>
<keyword id="KW-0413">Isomerase</keyword>
<keyword id="KW-0442">Lipid degradation</keyword>
<keyword id="KW-0443">Lipid metabolism</keyword>
<keyword id="KW-0456">Lyase</keyword>
<keyword id="KW-0511">Multifunctional enzyme</keyword>
<keyword id="KW-0520">NAD</keyword>
<keyword id="KW-0560">Oxidoreductase</keyword>
<comment type="function">
    <text evidence="1">Involved in the aerobic and anaerobic degradation of long-chain fatty acids via beta-oxidation cycle. Catalyzes the formation of 3-oxoacyl-CoA from enoyl-CoA via L-3-hydroxyacyl-CoA. It can also use D-3-hydroxyacyl-CoA and cis-3-enoyl-CoA as substrate.</text>
</comment>
<comment type="catalytic activity">
    <reaction evidence="1">
        <text>a (3S)-3-hydroxyacyl-CoA + NAD(+) = a 3-oxoacyl-CoA + NADH + H(+)</text>
        <dbReference type="Rhea" id="RHEA:22432"/>
        <dbReference type="ChEBI" id="CHEBI:15378"/>
        <dbReference type="ChEBI" id="CHEBI:57318"/>
        <dbReference type="ChEBI" id="CHEBI:57540"/>
        <dbReference type="ChEBI" id="CHEBI:57945"/>
        <dbReference type="ChEBI" id="CHEBI:90726"/>
        <dbReference type="EC" id="1.1.1.35"/>
    </reaction>
</comment>
<comment type="catalytic activity">
    <reaction evidence="1">
        <text>a (3S)-3-hydroxyacyl-CoA = a (2E)-enoyl-CoA + H2O</text>
        <dbReference type="Rhea" id="RHEA:16105"/>
        <dbReference type="ChEBI" id="CHEBI:15377"/>
        <dbReference type="ChEBI" id="CHEBI:57318"/>
        <dbReference type="ChEBI" id="CHEBI:58856"/>
        <dbReference type="EC" id="4.2.1.17"/>
    </reaction>
</comment>
<comment type="catalytic activity">
    <reaction evidence="1">
        <text>a 4-saturated-(3S)-3-hydroxyacyl-CoA = a (3E)-enoyl-CoA + H2O</text>
        <dbReference type="Rhea" id="RHEA:20724"/>
        <dbReference type="ChEBI" id="CHEBI:15377"/>
        <dbReference type="ChEBI" id="CHEBI:58521"/>
        <dbReference type="ChEBI" id="CHEBI:137480"/>
        <dbReference type="EC" id="4.2.1.17"/>
    </reaction>
</comment>
<comment type="catalytic activity">
    <reaction evidence="1">
        <text>(3S)-3-hydroxybutanoyl-CoA = (3R)-3-hydroxybutanoyl-CoA</text>
        <dbReference type="Rhea" id="RHEA:21760"/>
        <dbReference type="ChEBI" id="CHEBI:57315"/>
        <dbReference type="ChEBI" id="CHEBI:57316"/>
        <dbReference type="EC" id="5.1.2.3"/>
    </reaction>
</comment>
<comment type="catalytic activity">
    <reaction evidence="1">
        <text>a (3Z)-enoyl-CoA = a 4-saturated (2E)-enoyl-CoA</text>
        <dbReference type="Rhea" id="RHEA:45900"/>
        <dbReference type="ChEBI" id="CHEBI:85097"/>
        <dbReference type="ChEBI" id="CHEBI:85489"/>
        <dbReference type="EC" id="5.3.3.8"/>
    </reaction>
</comment>
<comment type="catalytic activity">
    <reaction evidence="1">
        <text>a (3E)-enoyl-CoA = a 4-saturated (2E)-enoyl-CoA</text>
        <dbReference type="Rhea" id="RHEA:45228"/>
        <dbReference type="ChEBI" id="CHEBI:58521"/>
        <dbReference type="ChEBI" id="CHEBI:85097"/>
        <dbReference type="EC" id="5.3.3.8"/>
    </reaction>
</comment>
<comment type="pathway">
    <text evidence="1">Lipid metabolism; fatty acid beta-oxidation.</text>
</comment>
<comment type="subunit">
    <text evidence="1">Heterotetramer of two alpha chains (FadB) and two beta chains (FadA).</text>
</comment>
<comment type="similarity">
    <text evidence="1">In the N-terminal section; belongs to the enoyl-CoA hydratase/isomerase family.</text>
</comment>
<comment type="similarity">
    <text evidence="1">In the C-terminal section; belongs to the 3-hydroxyacyl-CoA dehydrogenase family.</text>
</comment>
<sequence>MLYQSETLQLHWLENGIAELVFDAPGSVNKLDTKTVANLGEALNVLEKQSELKGLLLRSAKTALIVGADITEFLSLFNAPPEKLHQWLVFANTIFNRLEDLPVPTISAINGYALGGGCECILATDFRIASPEARIGLPETKLGIMPGFGGSVRLPRLLGADSALEIIATGKDVTANDALKIGLVDAVVDPEKLVGSALTMLKQAIDGKLDWQAARRPKLEPLKLNPTEAAMCFTIAKGRVMQVAGKHYPAPLTAVKTIEAAAKFGRTEALNLETNSFVPLAGSNEARALVGIFLNDQYVKAQAKKLSKGVAAPKLAAVLGAGIMGGGIAYQSALKSVPVIMKDINENSLDLGMNEAAKLLNKQLERGKVDGLKMASILATIRPTLDYAGIERAQVIVEAVVENPKVKAAVLAEVEALIGEDTVLASNTSTIPIDQLAKSLKRPENFCGMHFFNPVHQMPLVEIIRGAKTSDKTLAAVVAYATQMGKTPIVVNDCPGFFVNRVLFPYLAGFGMLVRDGGDFHQIDKVMEKQFGWPMGPAYLLDVVGIDTAHHAQAVMAAGFPERMNKDYRDAVDVMFDNQRFGQKNGQGFYRYTQDAKGKPRKENDEQVDKLLAEISQPLQEFSDEDIIARTMIPMINEVVRCLEEGIIASAAEGDMALVYGLGFPPFHGGVFRYLDTLGSANYVEMAQRYAHLGALYHVPAGLRAKAEHNESYYPVAAALLDVSTNQPA</sequence>
<protein>
    <recommendedName>
        <fullName evidence="1">Fatty acid oxidation complex subunit alpha</fullName>
    </recommendedName>
    <domain>
        <recommendedName>
            <fullName evidence="1">Enoyl-CoA hydratase/Delta(3)-cis-Delta(2)-trans-enoyl-CoA isomerase/3-hydroxybutyryl-CoA epimerase</fullName>
            <ecNumber evidence="1">4.2.1.17</ecNumber>
            <ecNumber evidence="1">5.1.2.3</ecNumber>
            <ecNumber evidence="1">5.3.3.8</ecNumber>
        </recommendedName>
    </domain>
    <domain>
        <recommendedName>
            <fullName evidence="1">3-hydroxyacyl-CoA dehydrogenase</fullName>
            <ecNumber evidence="1">1.1.1.35</ecNumber>
        </recommendedName>
    </domain>
</protein>
<feature type="chain" id="PRO_1000186060" description="Fatty acid oxidation complex subunit alpha">
    <location>
        <begin position="1"/>
        <end position="729"/>
    </location>
</feature>
<feature type="region of interest" description="Enoyl-CoA hydratase/isomerase" evidence="1">
    <location>
        <begin position="1"/>
        <end position="189"/>
    </location>
</feature>
<feature type="region of interest" description="3-hydroxyacyl-CoA dehydrogenase" evidence="1">
    <location>
        <begin position="311"/>
        <end position="729"/>
    </location>
</feature>
<feature type="active site" description="For 3-hydroxyacyl-CoA dehydrogenase activity" evidence="1">
    <location>
        <position position="450"/>
    </location>
</feature>
<feature type="binding site" evidence="1">
    <location>
        <position position="296"/>
    </location>
    <ligand>
        <name>substrate</name>
    </ligand>
</feature>
<feature type="binding site" evidence="1">
    <location>
        <position position="324"/>
    </location>
    <ligand>
        <name>NAD(+)</name>
        <dbReference type="ChEBI" id="CHEBI:57540"/>
    </ligand>
</feature>
<feature type="binding site" evidence="1">
    <location>
        <position position="343"/>
    </location>
    <ligand>
        <name>NAD(+)</name>
        <dbReference type="ChEBI" id="CHEBI:57540"/>
    </ligand>
</feature>
<feature type="binding site" evidence="1">
    <location>
        <begin position="400"/>
        <end position="402"/>
    </location>
    <ligand>
        <name>NAD(+)</name>
        <dbReference type="ChEBI" id="CHEBI:57540"/>
    </ligand>
</feature>
<feature type="binding site" evidence="1">
    <location>
        <position position="407"/>
    </location>
    <ligand>
        <name>NAD(+)</name>
        <dbReference type="ChEBI" id="CHEBI:57540"/>
    </ligand>
</feature>
<feature type="binding site" evidence="1">
    <location>
        <position position="429"/>
    </location>
    <ligand>
        <name>NAD(+)</name>
        <dbReference type="ChEBI" id="CHEBI:57540"/>
    </ligand>
</feature>
<feature type="binding site" evidence="1">
    <location>
        <position position="453"/>
    </location>
    <ligand>
        <name>NAD(+)</name>
        <dbReference type="ChEBI" id="CHEBI:57540"/>
    </ligand>
</feature>
<feature type="binding site" evidence="1">
    <location>
        <position position="500"/>
    </location>
    <ligand>
        <name>substrate</name>
    </ligand>
</feature>
<feature type="binding site" evidence="1">
    <location>
        <position position="660"/>
    </location>
    <ligand>
        <name>substrate</name>
    </ligand>
</feature>
<feature type="site" description="Important for catalytic activity" evidence="1">
    <location>
        <position position="119"/>
    </location>
</feature>
<feature type="site" description="Important for catalytic activity" evidence="1">
    <location>
        <position position="139"/>
    </location>
</feature>
<proteinExistence type="inferred from homology"/>
<name>FADB_YERPB</name>
<dbReference type="EC" id="4.2.1.17" evidence="1"/>
<dbReference type="EC" id="5.1.2.3" evidence="1"/>
<dbReference type="EC" id="5.3.3.8" evidence="1"/>
<dbReference type="EC" id="1.1.1.35" evidence="1"/>
<dbReference type="EMBL" id="CP001048">
    <property type="protein sequence ID" value="ACC87278.1"/>
    <property type="molecule type" value="Genomic_DNA"/>
</dbReference>
<dbReference type="RefSeq" id="WP_011191547.1">
    <property type="nucleotide sequence ID" value="NZ_CP009780.1"/>
</dbReference>
<dbReference type="SMR" id="B2K0Z6"/>
<dbReference type="KEGG" id="ypb:YPTS_0283"/>
<dbReference type="PATRIC" id="fig|502801.10.peg.3961"/>
<dbReference type="UniPathway" id="UPA00659"/>
<dbReference type="GO" id="GO:0036125">
    <property type="term" value="C:fatty acid beta-oxidation multienzyme complex"/>
    <property type="evidence" value="ECO:0007669"/>
    <property type="project" value="InterPro"/>
</dbReference>
<dbReference type="GO" id="GO:0008692">
    <property type="term" value="F:3-hydroxybutyryl-CoA epimerase activity"/>
    <property type="evidence" value="ECO:0007669"/>
    <property type="project" value="UniProtKB-UniRule"/>
</dbReference>
<dbReference type="GO" id="GO:0004165">
    <property type="term" value="F:delta(3)-delta(2)-enoyl-CoA isomerase activity"/>
    <property type="evidence" value="ECO:0007669"/>
    <property type="project" value="UniProtKB-UniRule"/>
</dbReference>
<dbReference type="GO" id="GO:0004300">
    <property type="term" value="F:enoyl-CoA hydratase activity"/>
    <property type="evidence" value="ECO:0007669"/>
    <property type="project" value="UniProtKB-UniRule"/>
</dbReference>
<dbReference type="GO" id="GO:0016509">
    <property type="term" value="F:long-chain-3-hydroxyacyl-CoA dehydrogenase activity"/>
    <property type="evidence" value="ECO:0007669"/>
    <property type="project" value="TreeGrafter"/>
</dbReference>
<dbReference type="GO" id="GO:0070403">
    <property type="term" value="F:NAD+ binding"/>
    <property type="evidence" value="ECO:0007669"/>
    <property type="project" value="InterPro"/>
</dbReference>
<dbReference type="GO" id="GO:0006635">
    <property type="term" value="P:fatty acid beta-oxidation"/>
    <property type="evidence" value="ECO:0007669"/>
    <property type="project" value="UniProtKB-UniRule"/>
</dbReference>
<dbReference type="CDD" id="cd06558">
    <property type="entry name" value="crotonase-like"/>
    <property type="match status" value="1"/>
</dbReference>
<dbReference type="FunFam" id="1.10.1040.50:FF:000001">
    <property type="entry name" value="Fatty acid oxidation complex subunit alpha"/>
    <property type="match status" value="1"/>
</dbReference>
<dbReference type="FunFam" id="3.90.226.10:FF:000018">
    <property type="entry name" value="Fatty acid oxidation complex subunit alpha"/>
    <property type="match status" value="1"/>
</dbReference>
<dbReference type="FunFam" id="3.40.50.720:FF:000009">
    <property type="entry name" value="Fatty oxidation complex, alpha subunit"/>
    <property type="match status" value="1"/>
</dbReference>
<dbReference type="Gene3D" id="1.10.1040.50">
    <property type="match status" value="1"/>
</dbReference>
<dbReference type="Gene3D" id="3.90.226.10">
    <property type="entry name" value="2-enoyl-CoA Hydratase, Chain A, domain 1"/>
    <property type="match status" value="1"/>
</dbReference>
<dbReference type="Gene3D" id="3.40.50.720">
    <property type="entry name" value="NAD(P)-binding Rossmann-like Domain"/>
    <property type="match status" value="1"/>
</dbReference>
<dbReference type="HAMAP" id="MF_01621">
    <property type="entry name" value="FadB"/>
    <property type="match status" value="1"/>
</dbReference>
<dbReference type="InterPro" id="IPR006180">
    <property type="entry name" value="3-OHacyl-CoA_DH_CS"/>
</dbReference>
<dbReference type="InterPro" id="IPR006176">
    <property type="entry name" value="3-OHacyl-CoA_DH_NAD-bd"/>
</dbReference>
<dbReference type="InterPro" id="IPR006108">
    <property type="entry name" value="3HC_DH_C"/>
</dbReference>
<dbReference type="InterPro" id="IPR008927">
    <property type="entry name" value="6-PGluconate_DH-like_C_sf"/>
</dbReference>
<dbReference type="InterPro" id="IPR029045">
    <property type="entry name" value="ClpP/crotonase-like_dom_sf"/>
</dbReference>
<dbReference type="InterPro" id="IPR018376">
    <property type="entry name" value="Enoyl-CoA_hyd/isom_CS"/>
</dbReference>
<dbReference type="InterPro" id="IPR001753">
    <property type="entry name" value="Enoyl-CoA_hydra/iso"/>
</dbReference>
<dbReference type="InterPro" id="IPR050136">
    <property type="entry name" value="FA_oxidation_alpha_subunit"/>
</dbReference>
<dbReference type="InterPro" id="IPR012799">
    <property type="entry name" value="FadB"/>
</dbReference>
<dbReference type="InterPro" id="IPR036291">
    <property type="entry name" value="NAD(P)-bd_dom_sf"/>
</dbReference>
<dbReference type="NCBIfam" id="TIGR02437">
    <property type="entry name" value="FadB"/>
    <property type="match status" value="1"/>
</dbReference>
<dbReference type="NCBIfam" id="NF008727">
    <property type="entry name" value="PRK11730.1"/>
    <property type="match status" value="1"/>
</dbReference>
<dbReference type="PANTHER" id="PTHR43612">
    <property type="entry name" value="TRIFUNCTIONAL ENZYME SUBUNIT ALPHA"/>
    <property type="match status" value="1"/>
</dbReference>
<dbReference type="PANTHER" id="PTHR43612:SF3">
    <property type="entry name" value="TRIFUNCTIONAL ENZYME SUBUNIT ALPHA, MITOCHONDRIAL"/>
    <property type="match status" value="1"/>
</dbReference>
<dbReference type="Pfam" id="PF00725">
    <property type="entry name" value="3HCDH"/>
    <property type="match status" value="1"/>
</dbReference>
<dbReference type="Pfam" id="PF02737">
    <property type="entry name" value="3HCDH_N"/>
    <property type="match status" value="1"/>
</dbReference>
<dbReference type="Pfam" id="PF00378">
    <property type="entry name" value="ECH_1"/>
    <property type="match status" value="1"/>
</dbReference>
<dbReference type="SUPFAM" id="SSF48179">
    <property type="entry name" value="6-phosphogluconate dehydrogenase C-terminal domain-like"/>
    <property type="match status" value="2"/>
</dbReference>
<dbReference type="SUPFAM" id="SSF52096">
    <property type="entry name" value="ClpP/crotonase"/>
    <property type="match status" value="1"/>
</dbReference>
<dbReference type="SUPFAM" id="SSF51735">
    <property type="entry name" value="NAD(P)-binding Rossmann-fold domains"/>
    <property type="match status" value="1"/>
</dbReference>
<dbReference type="PROSITE" id="PS00067">
    <property type="entry name" value="3HCDH"/>
    <property type="match status" value="1"/>
</dbReference>
<dbReference type="PROSITE" id="PS00166">
    <property type="entry name" value="ENOYL_COA_HYDRATASE"/>
    <property type="match status" value="1"/>
</dbReference>
<reference key="1">
    <citation type="submission" date="2008-04" db="EMBL/GenBank/DDBJ databases">
        <title>Complete sequence of Yersinia pseudotuberculosis PB1/+.</title>
        <authorList>
            <person name="Copeland A."/>
            <person name="Lucas S."/>
            <person name="Lapidus A."/>
            <person name="Glavina del Rio T."/>
            <person name="Dalin E."/>
            <person name="Tice H."/>
            <person name="Bruce D."/>
            <person name="Goodwin L."/>
            <person name="Pitluck S."/>
            <person name="Munk A.C."/>
            <person name="Brettin T."/>
            <person name="Detter J.C."/>
            <person name="Han C."/>
            <person name="Tapia R."/>
            <person name="Schmutz J."/>
            <person name="Larimer F."/>
            <person name="Land M."/>
            <person name="Hauser L."/>
            <person name="Challacombe J.F."/>
            <person name="Green L."/>
            <person name="Lindler L.E."/>
            <person name="Nikolich M.P."/>
            <person name="Richardson P."/>
        </authorList>
    </citation>
    <scope>NUCLEOTIDE SEQUENCE [LARGE SCALE GENOMIC DNA]</scope>
    <source>
        <strain>PB1/+</strain>
    </source>
</reference>
<accession>B2K0Z6</accession>
<gene>
    <name evidence="1" type="primary">fadB</name>
    <name type="ordered locus">YPTS_0283</name>
</gene>
<organism>
    <name type="scientific">Yersinia pseudotuberculosis serotype IB (strain PB1/+)</name>
    <dbReference type="NCBI Taxonomy" id="502801"/>
    <lineage>
        <taxon>Bacteria</taxon>
        <taxon>Pseudomonadati</taxon>
        <taxon>Pseudomonadota</taxon>
        <taxon>Gammaproteobacteria</taxon>
        <taxon>Enterobacterales</taxon>
        <taxon>Yersiniaceae</taxon>
        <taxon>Yersinia</taxon>
    </lineage>
</organism>
<evidence type="ECO:0000255" key="1">
    <source>
        <dbReference type="HAMAP-Rule" id="MF_01621"/>
    </source>
</evidence>